<gene>
    <name type="primary">plp1</name>
    <name type="ORF">SPAC2F3.12c</name>
</gene>
<protein>
    <recommendedName>
        <fullName>Thioredoxin domain-containing protein plp1</fullName>
    </recommendedName>
    <alternativeName>
        <fullName>Phosducin-like protein 1</fullName>
    </alternativeName>
</protein>
<dbReference type="EMBL" id="CU329670">
    <property type="protein sequence ID" value="CAD43412.1"/>
    <property type="molecule type" value="Genomic_DNA"/>
</dbReference>
<dbReference type="RefSeq" id="NP_001018268.1">
    <property type="nucleotide sequence ID" value="NM_001019813.2"/>
</dbReference>
<dbReference type="SMR" id="O14095"/>
<dbReference type="BioGRID" id="280506">
    <property type="interactions" value="6"/>
</dbReference>
<dbReference type="FunCoup" id="O14095">
    <property type="interactions" value="913"/>
</dbReference>
<dbReference type="STRING" id="284812.O14095"/>
<dbReference type="iPTMnet" id="O14095"/>
<dbReference type="PaxDb" id="4896-SPAC2F3.12c.1"/>
<dbReference type="EnsemblFungi" id="SPAC2F3.12c.1">
    <property type="protein sequence ID" value="SPAC2F3.12c.1:pep"/>
    <property type="gene ID" value="SPAC2F3.12c"/>
</dbReference>
<dbReference type="GeneID" id="73288377"/>
<dbReference type="KEGG" id="spo:73288377"/>
<dbReference type="PomBase" id="SPAC2F3.12c">
    <property type="gene designation" value="plp1"/>
</dbReference>
<dbReference type="VEuPathDB" id="FungiDB:SPAC2F3.12c"/>
<dbReference type="eggNOG" id="KOG1672">
    <property type="taxonomic scope" value="Eukaryota"/>
</dbReference>
<dbReference type="eggNOG" id="KOG3909">
    <property type="taxonomic scope" value="Eukaryota"/>
</dbReference>
<dbReference type="HOGENOM" id="CLU_072378_0_1_1"/>
<dbReference type="InParanoid" id="O14095"/>
<dbReference type="OMA" id="IDQEMNK"/>
<dbReference type="PhylomeDB" id="O14095"/>
<dbReference type="PRO" id="PR:O14095"/>
<dbReference type="Proteomes" id="UP000002485">
    <property type="component" value="Chromosome I"/>
</dbReference>
<dbReference type="GO" id="GO:0005737">
    <property type="term" value="C:cytoplasm"/>
    <property type="evidence" value="ECO:0000318"/>
    <property type="project" value="GO_Central"/>
</dbReference>
<dbReference type="GO" id="GO:0005829">
    <property type="term" value="C:cytosol"/>
    <property type="evidence" value="ECO:0007005"/>
    <property type="project" value="PomBase"/>
</dbReference>
<dbReference type="GO" id="GO:0005634">
    <property type="term" value="C:nucleus"/>
    <property type="evidence" value="ECO:0007005"/>
    <property type="project" value="PomBase"/>
</dbReference>
<dbReference type="GO" id="GO:0009968">
    <property type="term" value="P:negative regulation of signal transduction"/>
    <property type="evidence" value="ECO:0007669"/>
    <property type="project" value="UniProtKB-KW"/>
</dbReference>
<dbReference type="GO" id="GO:0006457">
    <property type="term" value="P:protein folding"/>
    <property type="evidence" value="ECO:0000266"/>
    <property type="project" value="PomBase"/>
</dbReference>
<dbReference type="GO" id="GO:0019236">
    <property type="term" value="P:response to pheromone"/>
    <property type="evidence" value="ECO:0007669"/>
    <property type="project" value="UniProtKB-KW"/>
</dbReference>
<dbReference type="CDD" id="cd02989">
    <property type="entry name" value="Phd_like_TxnDC9"/>
    <property type="match status" value="1"/>
</dbReference>
<dbReference type="Gene3D" id="3.40.30.10">
    <property type="entry name" value="Glutaredoxin"/>
    <property type="match status" value="1"/>
</dbReference>
<dbReference type="InterPro" id="IPR036249">
    <property type="entry name" value="Thioredoxin-like_sf"/>
</dbReference>
<dbReference type="InterPro" id="IPR013766">
    <property type="entry name" value="Thioredoxin_domain"/>
</dbReference>
<dbReference type="PANTHER" id="PTHR21148">
    <property type="entry name" value="THIOREDOXIN DOMAIN-CONTAINING PROTEIN 9"/>
    <property type="match status" value="1"/>
</dbReference>
<dbReference type="Pfam" id="PF00085">
    <property type="entry name" value="Thioredoxin"/>
    <property type="match status" value="1"/>
</dbReference>
<dbReference type="SUPFAM" id="SSF52833">
    <property type="entry name" value="Thioredoxin-like"/>
    <property type="match status" value="1"/>
</dbReference>
<comment type="function">
    <text evidence="1">Inhibits early G-protein signaling events following pheromone stimulation. May help create heterodimerizable beta-tubulin by facilitating the efficient transfer of nascent beta-tubulin polypeptides to the folding apparatus (By similarity).</text>
</comment>
<comment type="subcellular location">
    <subcellularLocation>
        <location evidence="3">Cytoplasm</location>
    </subcellularLocation>
    <subcellularLocation>
        <location evidence="3">Nucleus</location>
    </subcellularLocation>
</comment>
<comment type="similarity">
    <text evidence="5">Belongs to the phosducin family.</text>
</comment>
<feature type="chain" id="PRO_0000120171" description="Thioredoxin domain-containing protein plp1">
    <location>
        <begin position="1"/>
        <end position="279"/>
    </location>
</feature>
<feature type="domain" description="Thioredoxin">
    <location>
        <begin position="137"/>
        <end position="248"/>
    </location>
</feature>
<feature type="region of interest" description="Disordered" evidence="2">
    <location>
        <begin position="56"/>
        <end position="75"/>
    </location>
</feature>
<feature type="region of interest" description="Disordered" evidence="2">
    <location>
        <begin position="254"/>
        <end position="279"/>
    </location>
</feature>
<feature type="compositionally biased region" description="Basic and acidic residues" evidence="2">
    <location>
        <begin position="56"/>
        <end position="70"/>
    </location>
</feature>
<feature type="compositionally biased region" description="Basic and acidic residues" evidence="2">
    <location>
        <begin position="254"/>
        <end position="267"/>
    </location>
</feature>
<feature type="modified residue" description="Phosphoserine" evidence="4">
    <location>
        <position position="272"/>
    </location>
</feature>
<feature type="modified residue" description="Phosphoserine" evidence="4">
    <location>
        <position position="275"/>
    </location>
</feature>
<organism>
    <name type="scientific">Schizosaccharomyces pombe (strain 972 / ATCC 24843)</name>
    <name type="common">Fission yeast</name>
    <dbReference type="NCBI Taxonomy" id="284812"/>
    <lineage>
        <taxon>Eukaryota</taxon>
        <taxon>Fungi</taxon>
        <taxon>Dikarya</taxon>
        <taxon>Ascomycota</taxon>
        <taxon>Taphrinomycotina</taxon>
        <taxon>Schizosaccharomycetes</taxon>
        <taxon>Schizosaccharomycetales</taxon>
        <taxon>Schizosaccharomycetaceae</taxon>
        <taxon>Schizosaccharomyces</taxon>
    </lineage>
</organism>
<evidence type="ECO:0000250" key="1"/>
<evidence type="ECO:0000256" key="2">
    <source>
        <dbReference type="SAM" id="MobiDB-lite"/>
    </source>
</evidence>
<evidence type="ECO:0000269" key="3">
    <source>
    </source>
</evidence>
<evidence type="ECO:0000269" key="4">
    <source>
    </source>
</evidence>
<evidence type="ECO:0000305" key="5"/>
<name>PLP1_SCHPO</name>
<proteinExistence type="evidence at protein level"/>
<reference key="1">
    <citation type="journal article" date="2002" name="Nature">
        <title>The genome sequence of Schizosaccharomyces pombe.</title>
        <authorList>
            <person name="Wood V."/>
            <person name="Gwilliam R."/>
            <person name="Rajandream M.A."/>
            <person name="Lyne M.H."/>
            <person name="Lyne R."/>
            <person name="Stewart A."/>
            <person name="Sgouros J.G."/>
            <person name="Peat N."/>
            <person name="Hayles J."/>
            <person name="Baker S.G."/>
            <person name="Basham D."/>
            <person name="Bowman S."/>
            <person name="Brooks K."/>
            <person name="Brown D."/>
            <person name="Brown S."/>
            <person name="Chillingworth T."/>
            <person name="Churcher C.M."/>
            <person name="Collins M."/>
            <person name="Connor R."/>
            <person name="Cronin A."/>
            <person name="Davis P."/>
            <person name="Feltwell T."/>
            <person name="Fraser A."/>
            <person name="Gentles S."/>
            <person name="Goble A."/>
            <person name="Hamlin N."/>
            <person name="Harris D.E."/>
            <person name="Hidalgo J."/>
            <person name="Hodgson G."/>
            <person name="Holroyd S."/>
            <person name="Hornsby T."/>
            <person name="Howarth S."/>
            <person name="Huckle E.J."/>
            <person name="Hunt S."/>
            <person name="Jagels K."/>
            <person name="James K.D."/>
            <person name="Jones L."/>
            <person name="Jones M."/>
            <person name="Leather S."/>
            <person name="McDonald S."/>
            <person name="McLean J."/>
            <person name="Mooney P."/>
            <person name="Moule S."/>
            <person name="Mungall K.L."/>
            <person name="Murphy L.D."/>
            <person name="Niblett D."/>
            <person name="Odell C."/>
            <person name="Oliver K."/>
            <person name="O'Neil S."/>
            <person name="Pearson D."/>
            <person name="Quail M.A."/>
            <person name="Rabbinowitsch E."/>
            <person name="Rutherford K.M."/>
            <person name="Rutter S."/>
            <person name="Saunders D."/>
            <person name="Seeger K."/>
            <person name="Sharp S."/>
            <person name="Skelton J."/>
            <person name="Simmonds M.N."/>
            <person name="Squares R."/>
            <person name="Squares S."/>
            <person name="Stevens K."/>
            <person name="Taylor K."/>
            <person name="Taylor R.G."/>
            <person name="Tivey A."/>
            <person name="Walsh S.V."/>
            <person name="Warren T."/>
            <person name="Whitehead S."/>
            <person name="Woodward J.R."/>
            <person name="Volckaert G."/>
            <person name="Aert R."/>
            <person name="Robben J."/>
            <person name="Grymonprez B."/>
            <person name="Weltjens I."/>
            <person name="Vanstreels E."/>
            <person name="Rieger M."/>
            <person name="Schaefer M."/>
            <person name="Mueller-Auer S."/>
            <person name="Gabel C."/>
            <person name="Fuchs M."/>
            <person name="Duesterhoeft A."/>
            <person name="Fritzc C."/>
            <person name="Holzer E."/>
            <person name="Moestl D."/>
            <person name="Hilbert H."/>
            <person name="Borzym K."/>
            <person name="Langer I."/>
            <person name="Beck A."/>
            <person name="Lehrach H."/>
            <person name="Reinhardt R."/>
            <person name="Pohl T.M."/>
            <person name="Eger P."/>
            <person name="Zimmermann W."/>
            <person name="Wedler H."/>
            <person name="Wambutt R."/>
            <person name="Purnelle B."/>
            <person name="Goffeau A."/>
            <person name="Cadieu E."/>
            <person name="Dreano S."/>
            <person name="Gloux S."/>
            <person name="Lelaure V."/>
            <person name="Mottier S."/>
            <person name="Galibert F."/>
            <person name="Aves S.J."/>
            <person name="Xiang Z."/>
            <person name="Hunt C."/>
            <person name="Moore K."/>
            <person name="Hurst S.M."/>
            <person name="Lucas M."/>
            <person name="Rochet M."/>
            <person name="Gaillardin C."/>
            <person name="Tallada V.A."/>
            <person name="Garzon A."/>
            <person name="Thode G."/>
            <person name="Daga R.R."/>
            <person name="Cruzado L."/>
            <person name="Jimenez J."/>
            <person name="Sanchez M."/>
            <person name="del Rey F."/>
            <person name="Benito J."/>
            <person name="Dominguez A."/>
            <person name="Revuelta J.L."/>
            <person name="Moreno S."/>
            <person name="Armstrong J."/>
            <person name="Forsburg S.L."/>
            <person name="Cerutti L."/>
            <person name="Lowe T."/>
            <person name="McCombie W.R."/>
            <person name="Paulsen I."/>
            <person name="Potashkin J."/>
            <person name="Shpakovski G.V."/>
            <person name="Ussery D."/>
            <person name="Barrell B.G."/>
            <person name="Nurse P."/>
        </authorList>
    </citation>
    <scope>NUCLEOTIDE SEQUENCE [LARGE SCALE GENOMIC DNA]</scope>
    <source>
        <strain>972 / ATCC 24843</strain>
    </source>
</reference>
<reference key="2">
    <citation type="journal article" date="2006" name="Nat. Biotechnol.">
        <title>ORFeome cloning and global analysis of protein localization in the fission yeast Schizosaccharomyces pombe.</title>
        <authorList>
            <person name="Matsuyama A."/>
            <person name="Arai R."/>
            <person name="Yashiroda Y."/>
            <person name="Shirai A."/>
            <person name="Kamata A."/>
            <person name="Sekido S."/>
            <person name="Kobayashi Y."/>
            <person name="Hashimoto A."/>
            <person name="Hamamoto M."/>
            <person name="Hiraoka Y."/>
            <person name="Horinouchi S."/>
            <person name="Yoshida M."/>
        </authorList>
    </citation>
    <scope>SUBCELLULAR LOCATION [LARGE SCALE ANALYSIS]</scope>
</reference>
<reference key="3">
    <citation type="journal article" date="2008" name="J. Proteome Res.">
        <title>Phosphoproteome analysis of fission yeast.</title>
        <authorList>
            <person name="Wilson-Grady J.T."/>
            <person name="Villen J."/>
            <person name="Gygi S.P."/>
        </authorList>
    </citation>
    <scope>PHOSPHORYLATION [LARGE SCALE ANALYSIS] AT SER-272 AND SER-275</scope>
    <scope>IDENTIFICATION BY MASS SPECTROMETRY</scope>
</reference>
<accession>O14095</accession>
<accession>Q8NIQ0</accession>
<keyword id="KW-0143">Chaperone</keyword>
<keyword id="KW-0963">Cytoplasm</keyword>
<keyword id="KW-0539">Nucleus</keyword>
<keyword id="KW-0589">Pheromone response</keyword>
<keyword id="KW-0597">Phosphoprotein</keyword>
<keyword id="KW-1185">Reference proteome</keyword>
<keyword id="KW-0734">Signal transduction inhibitor</keyword>
<sequence>MTSFPASHGFGPRKRGYQMDLTNVQPVENKPAWISMKSPLEKEIANEYEALKVTERKEDTQDYNEPELHNSNDPTVDLYADTYATQAATESDSELEDALFSQLDEFDDTAYREQRLEMLKKEFARVEAAKEKGHMQFLTVENEREVMDFTLSSKKVVIHFYHPDFIRCKIIDSHLEKIAKVHWETKFIRIEAANAPFLVVKLGLKVLPAVLCYVNSQLVDKIIGFADLGNKDDFETSLLEFRLLKSSAIDRLKEESSSNKSIYHDELQNNQSDDSDFFE</sequence>